<organism>
    <name type="scientific">Arabidopsis thaliana</name>
    <name type="common">Mouse-ear cress</name>
    <dbReference type="NCBI Taxonomy" id="3702"/>
    <lineage>
        <taxon>Eukaryota</taxon>
        <taxon>Viridiplantae</taxon>
        <taxon>Streptophyta</taxon>
        <taxon>Embryophyta</taxon>
        <taxon>Tracheophyta</taxon>
        <taxon>Spermatophyta</taxon>
        <taxon>Magnoliopsida</taxon>
        <taxon>eudicotyledons</taxon>
        <taxon>Gunneridae</taxon>
        <taxon>Pentapetalae</taxon>
        <taxon>rosids</taxon>
        <taxon>malvids</taxon>
        <taxon>Brassicales</taxon>
        <taxon>Brassicaceae</taxon>
        <taxon>Camelineae</taxon>
        <taxon>Arabidopsis</taxon>
    </lineage>
</organism>
<accession>O65268</accession>
<keyword id="KW-0025">Alternative splicing</keyword>
<keyword id="KW-0068">Autocatalytic cleavage</keyword>
<keyword id="KW-0378">Hydrolase</keyword>
<keyword id="KW-0645">Protease</keyword>
<keyword id="KW-1185">Reference proteome</keyword>
<keyword id="KW-0888">Threonine protease</keyword>
<keyword id="KW-0865">Zymogen</keyword>
<evidence type="ECO:0000250" key="1"/>
<evidence type="ECO:0000305" key="2"/>
<gene>
    <name type="ordered locus">At4g00590</name>
    <name type="ORF">F6N23.5</name>
</gene>
<dbReference type="EC" id="3.4.25.-"/>
<dbReference type="EMBL" id="AF058919">
    <property type="protein sequence ID" value="AAC13614.1"/>
    <property type="status" value="ALT_SEQ"/>
    <property type="molecule type" value="Genomic_DNA"/>
</dbReference>
<dbReference type="EMBL" id="AL161472">
    <property type="protein sequence ID" value="CAB80868.1"/>
    <property type="status" value="ALT_SEQ"/>
    <property type="molecule type" value="Genomic_DNA"/>
</dbReference>
<dbReference type="EMBL" id="CP002687">
    <property type="protein sequence ID" value="AEE81906.1"/>
    <property type="molecule type" value="Genomic_DNA"/>
</dbReference>
<dbReference type="EMBL" id="BX827980">
    <property type="status" value="NOT_ANNOTATED_CDS"/>
    <property type="molecule type" value="mRNA"/>
</dbReference>
<dbReference type="PIR" id="T01223">
    <property type="entry name" value="T01223"/>
</dbReference>
<dbReference type="RefSeq" id="NP_191968.3">
    <molecule id="O65268-1"/>
    <property type="nucleotide sequence ID" value="NM_116284.4"/>
</dbReference>
<dbReference type="SMR" id="O65268"/>
<dbReference type="FunCoup" id="O65268">
    <property type="interactions" value="2655"/>
</dbReference>
<dbReference type="STRING" id="3702.O65268"/>
<dbReference type="MEROPS" id="T02.004"/>
<dbReference type="PaxDb" id="3702-AT4G00590.1"/>
<dbReference type="EnsemblPlants" id="AT4G00590.1">
    <molecule id="O65268-1"/>
    <property type="protein sequence ID" value="AT4G00590.1"/>
    <property type="gene ID" value="AT4G00590"/>
</dbReference>
<dbReference type="GeneID" id="827968"/>
<dbReference type="Gramene" id="AT4G00590.1">
    <molecule id="O65268-1"/>
    <property type="protein sequence ID" value="AT4G00590.1"/>
    <property type="gene ID" value="AT4G00590"/>
</dbReference>
<dbReference type="KEGG" id="ath:AT4G00590"/>
<dbReference type="Araport" id="AT4G00590"/>
<dbReference type="TAIR" id="AT4G00590"/>
<dbReference type="eggNOG" id="KOG1592">
    <property type="taxonomic scope" value="Eukaryota"/>
</dbReference>
<dbReference type="HOGENOM" id="CLU_021603_5_0_1"/>
<dbReference type="InParanoid" id="O65268"/>
<dbReference type="OMA" id="RLWCAFT"/>
<dbReference type="BioCyc" id="ARA:AT4G00590-MONOMER"/>
<dbReference type="PRO" id="PR:O65268"/>
<dbReference type="Proteomes" id="UP000006548">
    <property type="component" value="Chromosome 4"/>
</dbReference>
<dbReference type="ExpressionAtlas" id="O65268">
    <property type="expression patterns" value="baseline and differential"/>
</dbReference>
<dbReference type="GO" id="GO:0004298">
    <property type="term" value="F:threonine-type endopeptidase activity"/>
    <property type="evidence" value="ECO:0007669"/>
    <property type="project" value="UniProtKB-KW"/>
</dbReference>
<dbReference type="GO" id="GO:0006508">
    <property type="term" value="P:proteolysis"/>
    <property type="evidence" value="ECO:0007669"/>
    <property type="project" value="UniProtKB-KW"/>
</dbReference>
<dbReference type="CDD" id="cd04514">
    <property type="entry name" value="Taspase1_like"/>
    <property type="match status" value="1"/>
</dbReference>
<dbReference type="FunFam" id="3.60.20.30:FF:000004">
    <property type="entry name" value="Putative threonine aspartase isoform A"/>
    <property type="match status" value="1"/>
</dbReference>
<dbReference type="Gene3D" id="3.60.20.30">
    <property type="entry name" value="(Glycosyl)asparaginase"/>
    <property type="match status" value="1"/>
</dbReference>
<dbReference type="InterPro" id="IPR029055">
    <property type="entry name" value="Ntn_hydrolases_N"/>
</dbReference>
<dbReference type="InterPro" id="IPR000246">
    <property type="entry name" value="Peptidase_T2"/>
</dbReference>
<dbReference type="InterPro" id="IPR037464">
    <property type="entry name" value="Taspase1"/>
</dbReference>
<dbReference type="PANTHER" id="PTHR10188">
    <property type="entry name" value="L-ASPARAGINASE"/>
    <property type="match status" value="1"/>
</dbReference>
<dbReference type="PANTHER" id="PTHR10188:SF8">
    <property type="entry name" value="THREONINE ASPARTASE 1"/>
    <property type="match status" value="1"/>
</dbReference>
<dbReference type="Pfam" id="PF01112">
    <property type="entry name" value="Asparaginase_2"/>
    <property type="match status" value="1"/>
</dbReference>
<dbReference type="SUPFAM" id="SSF56235">
    <property type="entry name" value="N-terminal nucleophile aminohydrolases (Ntn hydrolases)"/>
    <property type="match status" value="1"/>
</dbReference>
<proteinExistence type="evidence at transcript level"/>
<sequence>MMAGDGADQSRRFFVAVHVGAGYHAAANEKALRSVMRRACLAASTILRQDSGECIDAVSAAIQVLEDDPSTNAGRGSNLTEDGHVECDASLMDGDSGMFGGVGAVPGVRNAIKIAALLVKEQITGSTLLGRIPPMLLVGEGARRWGKSKSVLIPGTVTEADQWLVTERARNQWRRFKAMLSEVGAKSILSAEEHPRGTENNETCEENVSSCAAADEDKIMDTVGVICVDNEGHIACGSSSGGIAMKISGRVGLAATYGSGCWASSKGPFGAPFLVGCCVSGAGEYLMRGFAARECCTSLALSQAGPASAAMKVLRSVMHQESSKIGTADKTAGILVVQADASVVVPGSKPELNAVEIAAAYSSLSFGVGYYGNSIEKPKISILRTRRQMSEAGVDHFEARIDLRPTCC</sequence>
<protein>
    <recommendedName>
        <fullName>Putative threonine aspartase</fullName>
        <shortName>Taspase-1</shortName>
        <ecNumber>3.4.25.-</ecNumber>
    </recommendedName>
    <component>
        <recommendedName>
            <fullName>Putative threonine aspartase subunit alpha</fullName>
        </recommendedName>
    </component>
    <component>
        <recommendedName>
            <fullName>Putative threonine aspartase subunit beta</fullName>
        </recommendedName>
    </component>
</protein>
<name>TASP1_ARATH</name>
<reference key="1">
    <citation type="journal article" date="1999" name="Nature">
        <title>Sequence and analysis of chromosome 4 of the plant Arabidopsis thaliana.</title>
        <authorList>
            <person name="Mayer K.F.X."/>
            <person name="Schueller C."/>
            <person name="Wambutt R."/>
            <person name="Murphy G."/>
            <person name="Volckaert G."/>
            <person name="Pohl T."/>
            <person name="Duesterhoeft A."/>
            <person name="Stiekema W."/>
            <person name="Entian K.-D."/>
            <person name="Terryn N."/>
            <person name="Harris B."/>
            <person name="Ansorge W."/>
            <person name="Brandt P."/>
            <person name="Grivell L.A."/>
            <person name="Rieger M."/>
            <person name="Weichselgartner M."/>
            <person name="de Simone V."/>
            <person name="Obermaier B."/>
            <person name="Mache R."/>
            <person name="Mueller M."/>
            <person name="Kreis M."/>
            <person name="Delseny M."/>
            <person name="Puigdomenech P."/>
            <person name="Watson M."/>
            <person name="Schmidtheini T."/>
            <person name="Reichert B."/>
            <person name="Portetelle D."/>
            <person name="Perez-Alonso M."/>
            <person name="Boutry M."/>
            <person name="Bancroft I."/>
            <person name="Vos P."/>
            <person name="Hoheisel J."/>
            <person name="Zimmermann W."/>
            <person name="Wedler H."/>
            <person name="Ridley P."/>
            <person name="Langham S.-A."/>
            <person name="McCullagh B."/>
            <person name="Bilham L."/>
            <person name="Robben J."/>
            <person name="van der Schueren J."/>
            <person name="Grymonprez B."/>
            <person name="Chuang Y.-J."/>
            <person name="Vandenbussche F."/>
            <person name="Braeken M."/>
            <person name="Weltjens I."/>
            <person name="Voet M."/>
            <person name="Bastiaens I."/>
            <person name="Aert R."/>
            <person name="Defoor E."/>
            <person name="Weitzenegger T."/>
            <person name="Bothe G."/>
            <person name="Ramsperger U."/>
            <person name="Hilbert H."/>
            <person name="Braun M."/>
            <person name="Holzer E."/>
            <person name="Brandt A."/>
            <person name="Peters S."/>
            <person name="van Staveren M."/>
            <person name="Dirkse W."/>
            <person name="Mooijman P."/>
            <person name="Klein Lankhorst R."/>
            <person name="Rose M."/>
            <person name="Hauf J."/>
            <person name="Koetter P."/>
            <person name="Berneiser S."/>
            <person name="Hempel S."/>
            <person name="Feldpausch M."/>
            <person name="Lamberth S."/>
            <person name="Van den Daele H."/>
            <person name="De Keyser A."/>
            <person name="Buysshaert C."/>
            <person name="Gielen J."/>
            <person name="Villarroel R."/>
            <person name="De Clercq R."/>
            <person name="van Montagu M."/>
            <person name="Rogers J."/>
            <person name="Cronin A."/>
            <person name="Quail M.A."/>
            <person name="Bray-Allen S."/>
            <person name="Clark L."/>
            <person name="Doggett J."/>
            <person name="Hall S."/>
            <person name="Kay M."/>
            <person name="Lennard N."/>
            <person name="McLay K."/>
            <person name="Mayes R."/>
            <person name="Pettett A."/>
            <person name="Rajandream M.A."/>
            <person name="Lyne M."/>
            <person name="Benes V."/>
            <person name="Rechmann S."/>
            <person name="Borkova D."/>
            <person name="Bloecker H."/>
            <person name="Scharfe M."/>
            <person name="Grimm M."/>
            <person name="Loehnert T.-H."/>
            <person name="Dose S."/>
            <person name="de Haan M."/>
            <person name="Maarse A.C."/>
            <person name="Schaefer M."/>
            <person name="Mueller-Auer S."/>
            <person name="Gabel C."/>
            <person name="Fuchs M."/>
            <person name="Fartmann B."/>
            <person name="Granderath K."/>
            <person name="Dauner D."/>
            <person name="Herzl A."/>
            <person name="Neumann S."/>
            <person name="Argiriou A."/>
            <person name="Vitale D."/>
            <person name="Liguori R."/>
            <person name="Piravandi E."/>
            <person name="Massenet O."/>
            <person name="Quigley F."/>
            <person name="Clabauld G."/>
            <person name="Muendlein A."/>
            <person name="Felber R."/>
            <person name="Schnabl S."/>
            <person name="Hiller R."/>
            <person name="Schmidt W."/>
            <person name="Lecharny A."/>
            <person name="Aubourg S."/>
            <person name="Chefdor F."/>
            <person name="Cooke R."/>
            <person name="Berger C."/>
            <person name="Monfort A."/>
            <person name="Casacuberta E."/>
            <person name="Gibbons T."/>
            <person name="Weber N."/>
            <person name="Vandenbol M."/>
            <person name="Bargues M."/>
            <person name="Terol J."/>
            <person name="Torres A."/>
            <person name="Perez-Perez A."/>
            <person name="Purnelle B."/>
            <person name="Bent E."/>
            <person name="Johnson S."/>
            <person name="Tacon D."/>
            <person name="Jesse T."/>
            <person name="Heijnen L."/>
            <person name="Schwarz S."/>
            <person name="Scholler P."/>
            <person name="Heber S."/>
            <person name="Francs P."/>
            <person name="Bielke C."/>
            <person name="Frishman D."/>
            <person name="Haase D."/>
            <person name="Lemcke K."/>
            <person name="Mewes H.-W."/>
            <person name="Stocker S."/>
            <person name="Zaccaria P."/>
            <person name="Bevan M."/>
            <person name="Wilson R.K."/>
            <person name="de la Bastide M."/>
            <person name="Habermann K."/>
            <person name="Parnell L."/>
            <person name="Dedhia N."/>
            <person name="Gnoj L."/>
            <person name="Schutz K."/>
            <person name="Huang E."/>
            <person name="Spiegel L."/>
            <person name="Sekhon M."/>
            <person name="Murray J."/>
            <person name="Sheet P."/>
            <person name="Cordes M."/>
            <person name="Abu-Threideh J."/>
            <person name="Stoneking T."/>
            <person name="Kalicki J."/>
            <person name="Graves T."/>
            <person name="Harmon G."/>
            <person name="Edwards J."/>
            <person name="Latreille P."/>
            <person name="Courtney L."/>
            <person name="Cloud J."/>
            <person name="Abbott A."/>
            <person name="Scott K."/>
            <person name="Johnson D."/>
            <person name="Minx P."/>
            <person name="Bentley D."/>
            <person name="Fulton B."/>
            <person name="Miller N."/>
            <person name="Greco T."/>
            <person name="Kemp K."/>
            <person name="Kramer J."/>
            <person name="Fulton L."/>
            <person name="Mardis E."/>
            <person name="Dante M."/>
            <person name="Pepin K."/>
            <person name="Hillier L.W."/>
            <person name="Nelson J."/>
            <person name="Spieth J."/>
            <person name="Ryan E."/>
            <person name="Andrews S."/>
            <person name="Geisel C."/>
            <person name="Layman D."/>
            <person name="Du H."/>
            <person name="Ali J."/>
            <person name="Berghoff A."/>
            <person name="Jones K."/>
            <person name="Drone K."/>
            <person name="Cotton M."/>
            <person name="Joshu C."/>
            <person name="Antonoiu B."/>
            <person name="Zidanic M."/>
            <person name="Strong C."/>
            <person name="Sun H."/>
            <person name="Lamar B."/>
            <person name="Yordan C."/>
            <person name="Ma P."/>
            <person name="Zhong J."/>
            <person name="Preston R."/>
            <person name="Vil D."/>
            <person name="Shekher M."/>
            <person name="Matero A."/>
            <person name="Shah R."/>
            <person name="Swaby I.K."/>
            <person name="O'Shaughnessy A."/>
            <person name="Rodriguez M."/>
            <person name="Hoffman J."/>
            <person name="Till S."/>
            <person name="Granat S."/>
            <person name="Shohdy N."/>
            <person name="Hasegawa A."/>
            <person name="Hameed A."/>
            <person name="Lodhi M."/>
            <person name="Johnson A."/>
            <person name="Chen E."/>
            <person name="Marra M.A."/>
            <person name="Martienssen R."/>
            <person name="McCombie W.R."/>
        </authorList>
    </citation>
    <scope>NUCLEOTIDE SEQUENCE [LARGE SCALE GENOMIC DNA]</scope>
    <source>
        <strain>cv. Columbia</strain>
    </source>
</reference>
<reference key="2">
    <citation type="journal article" date="2017" name="Plant J.">
        <title>Araport11: a complete reannotation of the Arabidopsis thaliana reference genome.</title>
        <authorList>
            <person name="Cheng C.Y."/>
            <person name="Krishnakumar V."/>
            <person name="Chan A.P."/>
            <person name="Thibaud-Nissen F."/>
            <person name="Schobel S."/>
            <person name="Town C.D."/>
        </authorList>
    </citation>
    <scope>GENOME REANNOTATION</scope>
    <source>
        <strain>cv. Columbia</strain>
    </source>
</reference>
<reference key="3">
    <citation type="journal article" date="2004" name="Genome Res.">
        <title>Whole genome sequence comparisons and 'full-length' cDNA sequences: a combined approach to evaluate and improve Arabidopsis genome annotation.</title>
        <authorList>
            <person name="Castelli V."/>
            <person name="Aury J.-M."/>
            <person name="Jaillon O."/>
            <person name="Wincker P."/>
            <person name="Clepet C."/>
            <person name="Menard M."/>
            <person name="Cruaud C."/>
            <person name="Quetier F."/>
            <person name="Scarpelli C."/>
            <person name="Schaechter V."/>
            <person name="Temple G."/>
            <person name="Caboche M."/>
            <person name="Weissenbach J."/>
            <person name="Salanoubat M."/>
        </authorList>
    </citation>
    <scope>NUCLEOTIDE SEQUENCE [LARGE SCALE MRNA]</scope>
    <source>
        <strain>cv. Columbia</strain>
    </source>
</reference>
<feature type="chain" id="PRO_0000045448" description="Putative threonine aspartase subunit alpha">
    <location>
        <begin position="1"/>
        <end position="221"/>
    </location>
</feature>
<feature type="chain" id="PRO_0000045449" description="Putative threonine aspartase subunit beta">
    <location>
        <begin position="222"/>
        <end position="408"/>
    </location>
</feature>
<feature type="active site" description="Nucleophile" evidence="1">
    <location>
        <position position="222"/>
    </location>
</feature>
<feature type="binding site" evidence="1">
    <location>
        <begin position="250"/>
        <end position="253"/>
    </location>
    <ligand>
        <name>substrate</name>
    </ligand>
</feature>
<feature type="site" description="Cleavage; by autolysis" evidence="1">
    <location>
        <begin position="221"/>
        <end position="222"/>
    </location>
</feature>
<comment type="subunit">
    <text evidence="1">Heterotetramer of two alpha and two beta chains arranged as a dimer of alpha/beta heterodimers.</text>
</comment>
<comment type="alternative products">
    <event type="alternative splicing"/>
    <isoform>
        <id>O65268-1</id>
        <name>1</name>
        <sequence type="displayed"/>
    </isoform>
    <text>A number of isoforms are produced. According to EST sequences.</text>
</comment>
<comment type="PTM">
    <text evidence="1">Cleaved into an alpha and beta chain by autocatalysis; this activates the enzyme. The N-terminal residue of the beta subunit is responsible for the nucleophile hydrolase activity (By similarity).</text>
</comment>
<comment type="similarity">
    <text evidence="2">Belongs to the Ntn-hydrolase family.</text>
</comment>
<comment type="sequence caution" evidence="2">
    <conflict type="erroneous gene model prediction">
        <sequence resource="EMBL-CDS" id="AAC13614"/>
    </conflict>
</comment>
<comment type="sequence caution" evidence="2">
    <conflict type="erroneous termination">
        <sequence resource="EMBL" id="BX827980"/>
    </conflict>
    <text>Truncated C-terminus.</text>
</comment>
<comment type="sequence caution" evidence="2">
    <conflict type="erroneous gene model prediction">
        <sequence resource="EMBL-CDS" id="CAB80868"/>
    </conflict>
</comment>